<protein>
    <recommendedName>
        <fullName>Enhancer of rudimentary homolog</fullName>
    </recommendedName>
    <component>
        <recommendedName>
            <fullName>Antibacterial peptide 3910</fullName>
            <shortName>AP 3910</shortName>
        </recommendedName>
    </component>
</protein>
<accession>P80230</accession>
<accession>P37110</accession>
<gene>
    <name type="primary">ERH</name>
</gene>
<evidence type="ECO:0000250" key="1"/>
<evidence type="ECO:0000250" key="2">
    <source>
        <dbReference type="UniProtKB" id="P84089"/>
    </source>
</evidence>
<evidence type="ECO:0000250" key="3">
    <source>
        <dbReference type="UniProtKB" id="P84090"/>
    </source>
</evidence>
<evidence type="ECO:0000305" key="4"/>
<feature type="peptide" id="PRO_0000008414" description="Antibacterial peptide 3910">
    <location>
        <begin position="1"/>
        <end position="32"/>
    </location>
</feature>
<feature type="non-terminal residue">
    <location>
        <position position="1"/>
    </location>
</feature>
<keyword id="KW-0044">Antibiotic</keyword>
<keyword id="KW-0929">Antimicrobial</keyword>
<keyword id="KW-0131">Cell cycle</keyword>
<keyword id="KW-0903">Direct protein sequencing</keyword>
<keyword id="KW-0539">Nucleus</keyword>
<keyword id="KW-1185">Reference proteome</keyword>
<proteinExistence type="evidence at protein level"/>
<organism>
    <name type="scientific">Sus scrofa</name>
    <name type="common">Pig</name>
    <dbReference type="NCBI Taxonomy" id="9823"/>
    <lineage>
        <taxon>Eukaryota</taxon>
        <taxon>Metazoa</taxon>
        <taxon>Chordata</taxon>
        <taxon>Craniata</taxon>
        <taxon>Vertebrata</taxon>
        <taxon>Euteleostomi</taxon>
        <taxon>Mammalia</taxon>
        <taxon>Eutheria</taxon>
        <taxon>Laurasiatheria</taxon>
        <taxon>Artiodactyla</taxon>
        <taxon>Suina</taxon>
        <taxon>Suidae</taxon>
        <taxon>Sus</taxon>
    </lineage>
</organism>
<reference key="1">
    <citation type="journal article" date="1993" name="Eur. J. Biochem.">
        <title>Isolation of three antibacterial peptides from pig intestine: gastric inhibitory polypeptide (7-42), diazepam-binding inhibitor (32-86) and a novel factor, peptide 3910.</title>
        <authorList>
            <person name="Agerberth B."/>
            <person name="Boman A."/>
            <person name="Andersson M."/>
            <person name="Joernvall H."/>
            <person name="Mutt V."/>
            <person name="Boman H.G."/>
        </authorList>
    </citation>
    <scope>PROTEIN SEQUENCE</scope>
    <source>
        <tissue>Intestine</tissue>
    </source>
</reference>
<dbReference type="PIR" id="S36841">
    <property type="entry name" value="S36841"/>
</dbReference>
<dbReference type="SMR" id="P80230"/>
<dbReference type="STRING" id="9823.ENSSSCP00000002505"/>
<dbReference type="PaxDb" id="9823-ENSSSCP00000002505"/>
<dbReference type="PeptideAtlas" id="P80230"/>
<dbReference type="eggNOG" id="KOG1766">
    <property type="taxonomic scope" value="Eukaryota"/>
</dbReference>
<dbReference type="HOGENOM" id="CLU_125703_1_0_1"/>
<dbReference type="InParanoid" id="P80230"/>
<dbReference type="Proteomes" id="UP000008227">
    <property type="component" value="Unplaced"/>
</dbReference>
<dbReference type="Proteomes" id="UP000314985">
    <property type="component" value="Unplaced"/>
</dbReference>
<dbReference type="Proteomes" id="UP000694570">
    <property type="component" value="Unplaced"/>
</dbReference>
<dbReference type="Proteomes" id="UP000694571">
    <property type="component" value="Unplaced"/>
</dbReference>
<dbReference type="Proteomes" id="UP000694720">
    <property type="component" value="Unplaced"/>
</dbReference>
<dbReference type="Proteomes" id="UP000694722">
    <property type="component" value="Unplaced"/>
</dbReference>
<dbReference type="Proteomes" id="UP000694723">
    <property type="component" value="Unplaced"/>
</dbReference>
<dbReference type="Proteomes" id="UP000694724">
    <property type="component" value="Unplaced"/>
</dbReference>
<dbReference type="Proteomes" id="UP000694725">
    <property type="component" value="Unplaced"/>
</dbReference>
<dbReference type="Proteomes" id="UP000694726">
    <property type="component" value="Unplaced"/>
</dbReference>
<dbReference type="Proteomes" id="UP000694727">
    <property type="component" value="Unplaced"/>
</dbReference>
<dbReference type="Proteomes" id="UP000694728">
    <property type="component" value="Unplaced"/>
</dbReference>
<dbReference type="GO" id="GO:0034709">
    <property type="term" value="C:methylosome"/>
    <property type="evidence" value="ECO:0000250"/>
    <property type="project" value="UniProtKB"/>
</dbReference>
<dbReference type="GO" id="GO:0005634">
    <property type="term" value="C:nucleus"/>
    <property type="evidence" value="ECO:0000266"/>
    <property type="project" value="UniProtKB"/>
</dbReference>
<dbReference type="GO" id="GO:0008327">
    <property type="term" value="F:methyl-CpG binding"/>
    <property type="evidence" value="ECO:0000250"/>
    <property type="project" value="UniProtKB"/>
</dbReference>
<dbReference type="GO" id="GO:0042742">
    <property type="term" value="P:defense response to bacterium"/>
    <property type="evidence" value="ECO:0007669"/>
    <property type="project" value="UniProtKB-KW"/>
</dbReference>
<dbReference type="Gene3D" id="3.30.2260.10">
    <property type="entry name" value="Enhancer of rudimentary"/>
    <property type="match status" value="1"/>
</dbReference>
<dbReference type="InterPro" id="IPR035912">
    <property type="entry name" value="EHR_sf"/>
</dbReference>
<dbReference type="InterPro" id="IPR000781">
    <property type="entry name" value="ERH"/>
</dbReference>
<dbReference type="Pfam" id="PF01133">
    <property type="entry name" value="ER"/>
    <property type="match status" value="1"/>
</dbReference>
<dbReference type="SUPFAM" id="SSF143875">
    <property type="entry name" value="ERH-like"/>
    <property type="match status" value="1"/>
</dbReference>
<comment type="function">
    <text evidence="1">May have a role in the cell cycle.</text>
</comment>
<comment type="function">
    <text>AP 3910 has antibacterial activity against B.megaterium.</text>
</comment>
<comment type="subunit">
    <text evidence="2 3">Homodimer. Component of the methylosome, a 20S complex containing at least CLNS1A/pICln, PRMT5/SKB1, WDR77/MEP50, PRMT1 and ERH. Interacts with CHTOP.</text>
</comment>
<comment type="subcellular location">
    <subcellularLocation>
        <location evidence="3">Nucleus</location>
    </subcellularLocation>
</comment>
<comment type="similarity">
    <text evidence="4">Belongs to the E(R) family.</text>
</comment>
<sequence>RADTQTYQPYNKDWIKEKIYVLLRRQAQQAGK</sequence>
<name>ERH_PIG</name>